<accession>A5U311</accession>
<sequence>MSRIEALPTHIKAQVLAEALPWLKQLHGKVVVVKYGGNAMTDDTLRRAFAADMAFLRNCGIHPVVVHGGGPQITAMLRRLGIEGDFKGGFRVTTPEVLDVARMVLFGQVGRELVNLINAHGPYAVGITGEDAQLFTAVRRSVTVDGVATDIGLVGDVDQVNTAAMLDLVAAGRIPVVSTLAPDADGVVHNINADTAAAAVAEALGAEKLLMLTDIDGLYTRWPDRDSLVSEIDTGTLAQLLPTLESGMVPKVEACLRAVIGGVPSAHIIDGRVTHCVLVELFTDAGTGTKVVRG</sequence>
<proteinExistence type="inferred from homology"/>
<organism>
    <name type="scientific">Mycobacterium tuberculosis (strain ATCC 25177 / H37Ra)</name>
    <dbReference type="NCBI Taxonomy" id="419947"/>
    <lineage>
        <taxon>Bacteria</taxon>
        <taxon>Bacillati</taxon>
        <taxon>Actinomycetota</taxon>
        <taxon>Actinomycetes</taxon>
        <taxon>Mycobacteriales</taxon>
        <taxon>Mycobacteriaceae</taxon>
        <taxon>Mycobacterium</taxon>
        <taxon>Mycobacterium tuberculosis complex</taxon>
    </lineage>
</organism>
<feature type="chain" id="PRO_1000010515" description="Acetylglutamate kinase">
    <location>
        <begin position="1"/>
        <end position="294"/>
    </location>
</feature>
<feature type="binding site" evidence="1">
    <location>
        <begin position="69"/>
        <end position="70"/>
    </location>
    <ligand>
        <name>substrate</name>
    </ligand>
</feature>
<feature type="binding site" evidence="1">
    <location>
        <position position="91"/>
    </location>
    <ligand>
        <name>substrate</name>
    </ligand>
</feature>
<feature type="binding site" evidence="1">
    <location>
        <position position="190"/>
    </location>
    <ligand>
        <name>substrate</name>
    </ligand>
</feature>
<feature type="site" description="Transition state stabilizer" evidence="1">
    <location>
        <position position="34"/>
    </location>
</feature>
<feature type="site" description="Transition state stabilizer" evidence="1">
    <location>
        <position position="251"/>
    </location>
</feature>
<keyword id="KW-0028">Amino-acid biosynthesis</keyword>
<keyword id="KW-0055">Arginine biosynthesis</keyword>
<keyword id="KW-0067">ATP-binding</keyword>
<keyword id="KW-0963">Cytoplasm</keyword>
<keyword id="KW-0418">Kinase</keyword>
<keyword id="KW-0547">Nucleotide-binding</keyword>
<keyword id="KW-1185">Reference proteome</keyword>
<keyword id="KW-0808">Transferase</keyword>
<reference key="1">
    <citation type="journal article" date="2008" name="PLoS ONE">
        <title>Genetic basis of virulence attenuation revealed by comparative genomic analysis of Mycobacterium tuberculosis strain H37Ra versus H37Rv.</title>
        <authorList>
            <person name="Zheng H."/>
            <person name="Lu L."/>
            <person name="Wang B."/>
            <person name="Pu S."/>
            <person name="Zhang X."/>
            <person name="Zhu G."/>
            <person name="Shi W."/>
            <person name="Zhang L."/>
            <person name="Wang H."/>
            <person name="Wang S."/>
            <person name="Zhao G."/>
            <person name="Zhang Y."/>
        </authorList>
    </citation>
    <scope>NUCLEOTIDE SEQUENCE [LARGE SCALE GENOMIC DNA]</scope>
    <source>
        <strain>ATCC 25177 / H37Ra</strain>
    </source>
</reference>
<dbReference type="EC" id="2.7.2.8" evidence="1"/>
<dbReference type="EMBL" id="CP000611">
    <property type="protein sequence ID" value="ABQ73411.1"/>
    <property type="molecule type" value="Genomic_DNA"/>
</dbReference>
<dbReference type="RefSeq" id="WP_003408161.1">
    <property type="nucleotide sequence ID" value="NZ_CP016972.1"/>
</dbReference>
<dbReference type="SMR" id="A5U311"/>
<dbReference type="KEGG" id="mra:MRA_1665"/>
<dbReference type="eggNOG" id="COG0548">
    <property type="taxonomic scope" value="Bacteria"/>
</dbReference>
<dbReference type="HOGENOM" id="CLU_053680_0_1_11"/>
<dbReference type="UniPathway" id="UPA00068">
    <property type="reaction ID" value="UER00107"/>
</dbReference>
<dbReference type="Proteomes" id="UP000001988">
    <property type="component" value="Chromosome"/>
</dbReference>
<dbReference type="GO" id="GO:0005737">
    <property type="term" value="C:cytoplasm"/>
    <property type="evidence" value="ECO:0007669"/>
    <property type="project" value="UniProtKB-SubCell"/>
</dbReference>
<dbReference type="GO" id="GO:0003991">
    <property type="term" value="F:acetylglutamate kinase activity"/>
    <property type="evidence" value="ECO:0007669"/>
    <property type="project" value="UniProtKB-UniRule"/>
</dbReference>
<dbReference type="GO" id="GO:0005524">
    <property type="term" value="F:ATP binding"/>
    <property type="evidence" value="ECO:0007669"/>
    <property type="project" value="UniProtKB-UniRule"/>
</dbReference>
<dbReference type="GO" id="GO:0042450">
    <property type="term" value="P:arginine biosynthetic process via ornithine"/>
    <property type="evidence" value="ECO:0007669"/>
    <property type="project" value="UniProtKB-UniRule"/>
</dbReference>
<dbReference type="GO" id="GO:0006526">
    <property type="term" value="P:L-arginine biosynthetic process"/>
    <property type="evidence" value="ECO:0007669"/>
    <property type="project" value="UniProtKB-UniPathway"/>
</dbReference>
<dbReference type="CDD" id="cd04250">
    <property type="entry name" value="AAK_NAGK-C"/>
    <property type="match status" value="1"/>
</dbReference>
<dbReference type="FunFam" id="3.40.1160.10:FF:000015">
    <property type="entry name" value="Acetylglutamate kinase"/>
    <property type="match status" value="1"/>
</dbReference>
<dbReference type="Gene3D" id="3.40.1160.10">
    <property type="entry name" value="Acetylglutamate kinase-like"/>
    <property type="match status" value="1"/>
</dbReference>
<dbReference type="HAMAP" id="MF_00082">
    <property type="entry name" value="ArgB"/>
    <property type="match status" value="1"/>
</dbReference>
<dbReference type="InterPro" id="IPR036393">
    <property type="entry name" value="AceGlu_kinase-like_sf"/>
</dbReference>
<dbReference type="InterPro" id="IPR004662">
    <property type="entry name" value="AcgluKinase_fam"/>
</dbReference>
<dbReference type="InterPro" id="IPR037528">
    <property type="entry name" value="ArgB"/>
</dbReference>
<dbReference type="InterPro" id="IPR001048">
    <property type="entry name" value="Asp/Glu/Uridylate_kinase"/>
</dbReference>
<dbReference type="InterPro" id="IPR001057">
    <property type="entry name" value="Glu/AcGlu_kinase"/>
</dbReference>
<dbReference type="InterPro" id="IPR041727">
    <property type="entry name" value="NAGK-C"/>
</dbReference>
<dbReference type="NCBIfam" id="TIGR00761">
    <property type="entry name" value="argB"/>
    <property type="match status" value="1"/>
</dbReference>
<dbReference type="PANTHER" id="PTHR23342">
    <property type="entry name" value="N-ACETYLGLUTAMATE SYNTHASE"/>
    <property type="match status" value="1"/>
</dbReference>
<dbReference type="PANTHER" id="PTHR23342:SF0">
    <property type="entry name" value="N-ACETYLGLUTAMATE SYNTHASE, MITOCHONDRIAL"/>
    <property type="match status" value="1"/>
</dbReference>
<dbReference type="Pfam" id="PF00696">
    <property type="entry name" value="AA_kinase"/>
    <property type="match status" value="1"/>
</dbReference>
<dbReference type="PIRSF" id="PIRSF000728">
    <property type="entry name" value="NAGK"/>
    <property type="match status" value="1"/>
</dbReference>
<dbReference type="PRINTS" id="PR00474">
    <property type="entry name" value="GLU5KINASE"/>
</dbReference>
<dbReference type="SUPFAM" id="SSF53633">
    <property type="entry name" value="Carbamate kinase-like"/>
    <property type="match status" value="1"/>
</dbReference>
<name>ARGB_MYCTA</name>
<evidence type="ECO:0000255" key="1">
    <source>
        <dbReference type="HAMAP-Rule" id="MF_00082"/>
    </source>
</evidence>
<protein>
    <recommendedName>
        <fullName evidence="1">Acetylglutamate kinase</fullName>
        <ecNumber evidence="1">2.7.2.8</ecNumber>
    </recommendedName>
    <alternativeName>
        <fullName evidence="1">N-acetyl-L-glutamate 5-phosphotransferase</fullName>
    </alternativeName>
    <alternativeName>
        <fullName evidence="1">NAG kinase</fullName>
        <shortName evidence="1">NAGK</shortName>
    </alternativeName>
</protein>
<gene>
    <name evidence="1" type="primary">argB</name>
    <name type="ordered locus">MRA_1665</name>
</gene>
<comment type="function">
    <text evidence="1">Catalyzes the ATP-dependent phosphorylation of N-acetyl-L-glutamate.</text>
</comment>
<comment type="catalytic activity">
    <reaction evidence="1">
        <text>N-acetyl-L-glutamate + ATP = N-acetyl-L-glutamyl 5-phosphate + ADP</text>
        <dbReference type="Rhea" id="RHEA:14629"/>
        <dbReference type="ChEBI" id="CHEBI:30616"/>
        <dbReference type="ChEBI" id="CHEBI:44337"/>
        <dbReference type="ChEBI" id="CHEBI:57936"/>
        <dbReference type="ChEBI" id="CHEBI:456216"/>
        <dbReference type="EC" id="2.7.2.8"/>
    </reaction>
</comment>
<comment type="pathway">
    <text evidence="1">Amino-acid biosynthesis; L-arginine biosynthesis; N(2)-acetyl-L-ornithine from L-glutamate: step 2/4.</text>
</comment>
<comment type="subcellular location">
    <subcellularLocation>
        <location evidence="1">Cytoplasm</location>
    </subcellularLocation>
</comment>
<comment type="similarity">
    <text evidence="1">Belongs to the acetylglutamate kinase family. ArgB subfamily.</text>
</comment>